<gene>
    <name evidence="10" type="primary">Nek6</name>
</gene>
<dbReference type="EC" id="2.7.11.34" evidence="7"/>
<dbReference type="EMBL" id="AF218847">
    <property type="protein sequence ID" value="AAG16653.1"/>
    <property type="molecule type" value="mRNA"/>
</dbReference>
<dbReference type="EMBL" id="AK004925">
    <property type="protein sequence ID" value="BAB23676.2"/>
    <property type="molecule type" value="mRNA"/>
</dbReference>
<dbReference type="EMBL" id="AK011519">
    <property type="protein sequence ID" value="BAB27673.2"/>
    <property type="molecule type" value="mRNA"/>
</dbReference>
<dbReference type="EMBL" id="AK075717">
    <property type="protein sequence ID" value="BAC35907.1"/>
    <property type="molecule type" value="mRNA"/>
</dbReference>
<dbReference type="EMBL" id="AK075836">
    <property type="protein sequence ID" value="BAC35995.1"/>
    <property type="molecule type" value="mRNA"/>
</dbReference>
<dbReference type="EMBL" id="AK086700">
    <property type="protein sequence ID" value="BAC39721.1"/>
    <property type="molecule type" value="mRNA"/>
</dbReference>
<dbReference type="EMBL" id="AK089919">
    <property type="protein sequence ID" value="BAC40995.1"/>
    <property type="molecule type" value="mRNA"/>
</dbReference>
<dbReference type="EMBL" id="AK170757">
    <property type="protein sequence ID" value="BAE42008.1"/>
    <property type="molecule type" value="mRNA"/>
</dbReference>
<dbReference type="EMBL" id="BC019524">
    <property type="protein sequence ID" value="AAH19524.1"/>
    <property type="molecule type" value="mRNA"/>
</dbReference>
<dbReference type="CCDS" id="CCDS16009.1"/>
<dbReference type="RefSeq" id="NP_001153103.1">
    <property type="nucleotide sequence ID" value="NM_001159631.1"/>
</dbReference>
<dbReference type="RefSeq" id="NP_067619.1">
    <property type="nucleotide sequence ID" value="NM_021606.3"/>
</dbReference>
<dbReference type="RefSeq" id="XP_006498273.1">
    <property type="nucleotide sequence ID" value="XM_006498210.5"/>
</dbReference>
<dbReference type="RefSeq" id="XP_030107782.1">
    <property type="nucleotide sequence ID" value="XM_030251922.2"/>
</dbReference>
<dbReference type="RefSeq" id="XP_030107783.1">
    <property type="nucleotide sequence ID" value="XM_030251923.2"/>
</dbReference>
<dbReference type="RefSeq" id="XP_030107784.1">
    <property type="nucleotide sequence ID" value="XM_030251924.2"/>
</dbReference>
<dbReference type="SMR" id="Q9ES70"/>
<dbReference type="BioGRID" id="208542">
    <property type="interactions" value="5"/>
</dbReference>
<dbReference type="FunCoup" id="Q9ES70">
    <property type="interactions" value="1150"/>
</dbReference>
<dbReference type="STRING" id="10090.ENSMUSP00000049723"/>
<dbReference type="iPTMnet" id="Q9ES70"/>
<dbReference type="PhosphoSitePlus" id="Q9ES70"/>
<dbReference type="PaxDb" id="10090-ENSMUSP00000049723"/>
<dbReference type="PeptideAtlas" id="Q9ES70"/>
<dbReference type="ProteomicsDB" id="287475"/>
<dbReference type="Pumba" id="Q9ES70"/>
<dbReference type="Antibodypedia" id="30447">
    <property type="antibodies" value="313 antibodies from 33 providers"/>
</dbReference>
<dbReference type="DNASU" id="59126"/>
<dbReference type="Ensembl" id="ENSMUST00000054234.10">
    <property type="protein sequence ID" value="ENSMUSP00000049723.4"/>
    <property type="gene ID" value="ENSMUSG00000026749.12"/>
</dbReference>
<dbReference type="Ensembl" id="ENSMUST00000112895.8">
    <property type="protein sequence ID" value="ENSMUSP00000108516.2"/>
    <property type="gene ID" value="ENSMUSG00000026749.12"/>
</dbReference>
<dbReference type="GeneID" id="59126"/>
<dbReference type="KEGG" id="mmu:59126"/>
<dbReference type="UCSC" id="uc008jnn.2">
    <property type="organism name" value="mouse"/>
</dbReference>
<dbReference type="AGR" id="MGI:1891638"/>
<dbReference type="CTD" id="10783"/>
<dbReference type="MGI" id="MGI:1891638">
    <property type="gene designation" value="Nek6"/>
</dbReference>
<dbReference type="VEuPathDB" id="HostDB:ENSMUSG00000026749"/>
<dbReference type="eggNOG" id="KOG0591">
    <property type="taxonomic scope" value="Eukaryota"/>
</dbReference>
<dbReference type="GeneTree" id="ENSGT00940000159990"/>
<dbReference type="InParanoid" id="Q9ES70"/>
<dbReference type="OMA" id="YACTVAT"/>
<dbReference type="OrthoDB" id="248923at2759"/>
<dbReference type="PhylomeDB" id="Q9ES70"/>
<dbReference type="TreeFam" id="TF101021"/>
<dbReference type="BioGRID-ORCS" id="59126">
    <property type="hits" value="2 hits in 81 CRISPR screens"/>
</dbReference>
<dbReference type="ChiTaRS" id="Nek6">
    <property type="organism name" value="mouse"/>
</dbReference>
<dbReference type="PRO" id="PR:Q9ES70"/>
<dbReference type="Proteomes" id="UP000000589">
    <property type="component" value="Chromosome 2"/>
</dbReference>
<dbReference type="RNAct" id="Q9ES70">
    <property type="molecule type" value="protein"/>
</dbReference>
<dbReference type="Bgee" id="ENSMUSG00000026749">
    <property type="expression patterns" value="Expressed in ventricular zone and 250 other cell types or tissues"/>
</dbReference>
<dbReference type="ExpressionAtlas" id="Q9ES70">
    <property type="expression patterns" value="baseline and differential"/>
</dbReference>
<dbReference type="GO" id="GO:0034451">
    <property type="term" value="C:centriolar satellite"/>
    <property type="evidence" value="ECO:0007669"/>
    <property type="project" value="Ensembl"/>
</dbReference>
<dbReference type="GO" id="GO:0005737">
    <property type="term" value="C:cytoplasm"/>
    <property type="evidence" value="ECO:0000314"/>
    <property type="project" value="UniProtKB"/>
</dbReference>
<dbReference type="GO" id="GO:0005829">
    <property type="term" value="C:cytosol"/>
    <property type="evidence" value="ECO:0007669"/>
    <property type="project" value="Ensembl"/>
</dbReference>
<dbReference type="GO" id="GO:0016607">
    <property type="term" value="C:nuclear speck"/>
    <property type="evidence" value="ECO:0007669"/>
    <property type="project" value="UniProtKB-SubCell"/>
</dbReference>
<dbReference type="GO" id="GO:0032991">
    <property type="term" value="C:protein-containing complex"/>
    <property type="evidence" value="ECO:0007669"/>
    <property type="project" value="Ensembl"/>
</dbReference>
<dbReference type="GO" id="GO:0000922">
    <property type="term" value="C:spindle pole"/>
    <property type="evidence" value="ECO:0007669"/>
    <property type="project" value="UniProtKB-SubCell"/>
</dbReference>
<dbReference type="GO" id="GO:0005524">
    <property type="term" value="F:ATP binding"/>
    <property type="evidence" value="ECO:0000250"/>
    <property type="project" value="UniProtKB"/>
</dbReference>
<dbReference type="GO" id="GO:0140297">
    <property type="term" value="F:DNA-binding transcription factor binding"/>
    <property type="evidence" value="ECO:0007669"/>
    <property type="project" value="Ensembl"/>
</dbReference>
<dbReference type="GO" id="GO:0019894">
    <property type="term" value="F:kinesin binding"/>
    <property type="evidence" value="ECO:0007669"/>
    <property type="project" value="Ensembl"/>
</dbReference>
<dbReference type="GO" id="GO:0000287">
    <property type="term" value="F:magnesium ion binding"/>
    <property type="evidence" value="ECO:0000250"/>
    <property type="project" value="UniProtKB"/>
</dbReference>
<dbReference type="GO" id="GO:0019901">
    <property type="term" value="F:protein kinase binding"/>
    <property type="evidence" value="ECO:0000250"/>
    <property type="project" value="UniProtKB"/>
</dbReference>
<dbReference type="GO" id="GO:0106310">
    <property type="term" value="F:protein serine kinase activity"/>
    <property type="evidence" value="ECO:0007669"/>
    <property type="project" value="RHEA"/>
</dbReference>
<dbReference type="GO" id="GO:0004674">
    <property type="term" value="F:protein serine/threonine kinase activity"/>
    <property type="evidence" value="ECO:0000314"/>
    <property type="project" value="UniProtKB"/>
</dbReference>
<dbReference type="GO" id="GO:0001222">
    <property type="term" value="F:transcription corepressor binding"/>
    <property type="evidence" value="ECO:0007669"/>
    <property type="project" value="Ensembl"/>
</dbReference>
<dbReference type="GO" id="GO:0031625">
    <property type="term" value="F:ubiquitin protein ligase binding"/>
    <property type="evidence" value="ECO:0007669"/>
    <property type="project" value="Ensembl"/>
</dbReference>
<dbReference type="GO" id="GO:0006915">
    <property type="term" value="P:apoptotic process"/>
    <property type="evidence" value="ECO:0007669"/>
    <property type="project" value="UniProtKB-KW"/>
</dbReference>
<dbReference type="GO" id="GO:0051301">
    <property type="term" value="P:cell division"/>
    <property type="evidence" value="ECO:0007669"/>
    <property type="project" value="UniProtKB-KW"/>
</dbReference>
<dbReference type="GO" id="GO:0007059">
    <property type="term" value="P:chromosome segregation"/>
    <property type="evidence" value="ECO:0000250"/>
    <property type="project" value="UniProtKB"/>
</dbReference>
<dbReference type="GO" id="GO:0046777">
    <property type="term" value="P:protein autophosphorylation"/>
    <property type="evidence" value="ECO:0000250"/>
    <property type="project" value="UniProtKB"/>
</dbReference>
<dbReference type="GO" id="GO:0006468">
    <property type="term" value="P:protein phosphorylation"/>
    <property type="evidence" value="ECO:0000250"/>
    <property type="project" value="UniProtKB"/>
</dbReference>
<dbReference type="GO" id="GO:0030071">
    <property type="term" value="P:regulation of mitotic metaphase/anaphase transition"/>
    <property type="evidence" value="ECO:0000250"/>
    <property type="project" value="UniProtKB"/>
</dbReference>
<dbReference type="CDD" id="cd08228">
    <property type="entry name" value="STKc_Nek6"/>
    <property type="match status" value="1"/>
</dbReference>
<dbReference type="FunFam" id="1.10.510.10:FF:000148">
    <property type="entry name" value="Serine/threonine-protein kinase Nek7"/>
    <property type="match status" value="1"/>
</dbReference>
<dbReference type="FunFam" id="3.30.200.20:FF:000204">
    <property type="entry name" value="Serine/threonine-protein kinase Nek7"/>
    <property type="match status" value="1"/>
</dbReference>
<dbReference type="FunFam" id="3.30.200.20:FF:000240">
    <property type="entry name" value="Serine/threonine-protein kinase Nek7"/>
    <property type="match status" value="1"/>
</dbReference>
<dbReference type="Gene3D" id="3.30.200.20">
    <property type="entry name" value="Phosphorylase Kinase, domain 1"/>
    <property type="match status" value="1"/>
</dbReference>
<dbReference type="Gene3D" id="1.10.510.10">
    <property type="entry name" value="Transferase(Phosphotransferase) domain 1"/>
    <property type="match status" value="1"/>
</dbReference>
<dbReference type="InterPro" id="IPR011009">
    <property type="entry name" value="Kinase-like_dom_sf"/>
</dbReference>
<dbReference type="InterPro" id="IPR000719">
    <property type="entry name" value="Prot_kinase_dom"/>
</dbReference>
<dbReference type="InterPro" id="IPR017441">
    <property type="entry name" value="Protein_kinase_ATP_BS"/>
</dbReference>
<dbReference type="InterPro" id="IPR001245">
    <property type="entry name" value="Ser-Thr/Tyr_kinase_cat_dom"/>
</dbReference>
<dbReference type="InterPro" id="IPR008271">
    <property type="entry name" value="Ser/Thr_kinase_AS"/>
</dbReference>
<dbReference type="PANTHER" id="PTHR43289">
    <property type="entry name" value="MITOGEN-ACTIVATED PROTEIN KINASE KINASE KINASE 20-RELATED"/>
    <property type="match status" value="1"/>
</dbReference>
<dbReference type="PANTHER" id="PTHR43289:SF13">
    <property type="entry name" value="MITOGEN-ACTIVATED PROTEIN KINASE KINASE KINASE 20-RELATED"/>
    <property type="match status" value="1"/>
</dbReference>
<dbReference type="Pfam" id="PF00069">
    <property type="entry name" value="Pkinase"/>
    <property type="match status" value="1"/>
</dbReference>
<dbReference type="PIRSF" id="PIRSF000654">
    <property type="entry name" value="Integrin-linked_kinase"/>
    <property type="match status" value="1"/>
</dbReference>
<dbReference type="PRINTS" id="PR00109">
    <property type="entry name" value="TYRKINASE"/>
</dbReference>
<dbReference type="SMART" id="SM00220">
    <property type="entry name" value="S_TKc"/>
    <property type="match status" value="1"/>
</dbReference>
<dbReference type="SUPFAM" id="SSF56112">
    <property type="entry name" value="Protein kinase-like (PK-like)"/>
    <property type="match status" value="1"/>
</dbReference>
<dbReference type="PROSITE" id="PS00107">
    <property type="entry name" value="PROTEIN_KINASE_ATP"/>
    <property type="match status" value="1"/>
</dbReference>
<dbReference type="PROSITE" id="PS50011">
    <property type="entry name" value="PROTEIN_KINASE_DOM"/>
    <property type="match status" value="1"/>
</dbReference>
<dbReference type="PROSITE" id="PS00108">
    <property type="entry name" value="PROTEIN_KINASE_ST"/>
    <property type="match status" value="1"/>
</dbReference>
<comment type="function">
    <text evidence="2 7">Protein kinase which plays an important role in mitotic cell cycle progression. Required for chromosome segregation at metaphase-anaphase transition, robust mitotic spindle formation and cytokinesis. Phosphorylates ATF4, CIR1, PTN, RAD26L, RBBP6, RPS7, TRIP4, RPS6KB1 and histones H1 and H3. Phosphorylates KIF11 to promote mitotic spindle formation. Involved in G2/M phase cell cycle arrest induced by DNA damage. Inhibition of activity results in apoptosis. May contribute to tumorigenesis by suppressing p53/TP53-induced cancer cell senescence (By similarity). Phosphorylates STAT3 (PubMed:20595392). Phosphorylates EML4 at 'Ser-144', promoting its dissociation from microtubules during mitosis which is required for efficient chromosome congression (By similarity).</text>
</comment>
<comment type="catalytic activity">
    <reaction evidence="7">
        <text>L-seryl-[protein] + ATP = O-phospho-L-seryl-[protein] + ADP + H(+)</text>
        <dbReference type="Rhea" id="RHEA:17989"/>
        <dbReference type="Rhea" id="RHEA-COMP:9863"/>
        <dbReference type="Rhea" id="RHEA-COMP:11604"/>
        <dbReference type="ChEBI" id="CHEBI:15378"/>
        <dbReference type="ChEBI" id="CHEBI:29999"/>
        <dbReference type="ChEBI" id="CHEBI:30616"/>
        <dbReference type="ChEBI" id="CHEBI:83421"/>
        <dbReference type="ChEBI" id="CHEBI:456216"/>
        <dbReference type="EC" id="2.7.11.34"/>
    </reaction>
</comment>
<comment type="catalytic activity">
    <reaction evidence="7">
        <text>L-threonyl-[protein] + ATP = O-phospho-L-threonyl-[protein] + ADP + H(+)</text>
        <dbReference type="Rhea" id="RHEA:46608"/>
        <dbReference type="Rhea" id="RHEA-COMP:11060"/>
        <dbReference type="Rhea" id="RHEA-COMP:11605"/>
        <dbReference type="ChEBI" id="CHEBI:15378"/>
        <dbReference type="ChEBI" id="CHEBI:30013"/>
        <dbReference type="ChEBI" id="CHEBI:30616"/>
        <dbReference type="ChEBI" id="CHEBI:61977"/>
        <dbReference type="ChEBI" id="CHEBI:456216"/>
        <dbReference type="EC" id="2.7.11.34"/>
    </reaction>
</comment>
<comment type="cofactor">
    <cofactor evidence="2">
        <name>Mg(2+)</name>
        <dbReference type="ChEBI" id="CHEBI:18420"/>
    </cofactor>
</comment>
<comment type="activity regulation">
    <text evidence="1">Binding to NEK9 stimulates its activity by releasing the autoinhibitory function of Tyr-108.</text>
</comment>
<comment type="subunit">
    <text evidence="1 7">Interacts with NEK9, predominantly in mitosis. Interacts with KIF11 (via C-terminus). Interacts with APBB1 (via WW domain). Interacts with ANKRA2, ATF4, ARHGAP33, CDC42, CIR1, PRAM1, PTN, PRDX3, PIN1, RAD26L, RBBP6, RPS7, RPS6KB1 and TRIP4 (By similarity). Interacts with STAT3.</text>
</comment>
<comment type="subcellular location">
    <subcellularLocation>
        <location>Cytoplasm</location>
    </subcellularLocation>
    <subcellularLocation>
        <location>Nucleus</location>
    </subcellularLocation>
    <subcellularLocation>
        <location evidence="1">Nucleus speckle</location>
    </subcellularLocation>
    <subcellularLocation>
        <location evidence="1">Cytoplasm</location>
        <location evidence="1">Cytoskeleton</location>
        <location evidence="1">Microtubule organizing center</location>
        <location evidence="1">Centrosome</location>
    </subcellularLocation>
    <subcellularLocation>
        <location evidence="1">Cytoplasm</location>
        <location evidence="1">Cytoskeleton</location>
        <location evidence="1">Spindle pole</location>
    </subcellularLocation>
    <text evidence="1">Co- localizes with APBB1 at the nuclear speckles. Colocalizes with PIN1 in the nucleus. Colocalizes with ATF4, CIR1, ARHGAP33, ANKRA2, CDC42, NEK9, RAD26L, RBBP6, RPS7, TRIP4, RELB and PHF1 in the centrosome. Localizes to spindle microtubules in metaphase and anaphase and to the midbody during cytokinesis (By similarity).</text>
</comment>
<comment type="tissue specificity">
    <text evidence="6">Highly expressed in the liver.</text>
</comment>
<comment type="domain">
    <text evidence="1">Displays an autoinhibited conformation: Tyr-108 side chain points into the active site, interacts with the activation loop, and blocks the alphaC helix. The autoinhibitory conformation is released upon binding with NEK9 (By similarity).</text>
</comment>
<comment type="PTM">
    <text evidence="1">Autophosphorylated. Phosphorylation at Ser-206 is required for its activation. Phosphorylated upon IR or UV-induced DNA damage. Phosphorylated by CHEK1 and CHEK2. Interaction with APBB1 down-regulates phosphorylation at Thr-210 (By similarity).</text>
</comment>
<comment type="similarity">
    <text evidence="8">Belongs to the protein kinase superfamily. NEK Ser/Thr protein kinase family. NIMA subfamily.</text>
</comment>
<reference key="1">
    <citation type="journal article" date="2000" name="Genomics">
        <title>Isolation and characterization of two evolutionarily conserved murine kinases (Nek6 and Nek7) related to the fungal mitotic regulator, NIMA.</title>
        <authorList>
            <person name="Kandli M."/>
            <person name="Feige E."/>
            <person name="Chen A."/>
            <person name="Kilfin G."/>
            <person name="Motro B."/>
        </authorList>
    </citation>
    <scope>NUCLEOTIDE SEQUENCE [MRNA]</scope>
    <scope>SUBCELLULAR LOCATION</scope>
</reference>
<reference key="2">
    <citation type="journal article" date="2005" name="Science">
        <title>The transcriptional landscape of the mammalian genome.</title>
        <authorList>
            <person name="Carninci P."/>
            <person name="Kasukawa T."/>
            <person name="Katayama S."/>
            <person name="Gough J."/>
            <person name="Frith M.C."/>
            <person name="Maeda N."/>
            <person name="Oyama R."/>
            <person name="Ravasi T."/>
            <person name="Lenhard B."/>
            <person name="Wells C."/>
            <person name="Kodzius R."/>
            <person name="Shimokawa K."/>
            <person name="Bajic V.B."/>
            <person name="Brenner S.E."/>
            <person name="Batalov S."/>
            <person name="Forrest A.R."/>
            <person name="Zavolan M."/>
            <person name="Davis M.J."/>
            <person name="Wilming L.G."/>
            <person name="Aidinis V."/>
            <person name="Allen J.E."/>
            <person name="Ambesi-Impiombato A."/>
            <person name="Apweiler R."/>
            <person name="Aturaliya R.N."/>
            <person name="Bailey T.L."/>
            <person name="Bansal M."/>
            <person name="Baxter L."/>
            <person name="Beisel K.W."/>
            <person name="Bersano T."/>
            <person name="Bono H."/>
            <person name="Chalk A.M."/>
            <person name="Chiu K.P."/>
            <person name="Choudhary V."/>
            <person name="Christoffels A."/>
            <person name="Clutterbuck D.R."/>
            <person name="Crowe M.L."/>
            <person name="Dalla E."/>
            <person name="Dalrymple B.P."/>
            <person name="de Bono B."/>
            <person name="Della Gatta G."/>
            <person name="di Bernardo D."/>
            <person name="Down T."/>
            <person name="Engstrom P."/>
            <person name="Fagiolini M."/>
            <person name="Faulkner G."/>
            <person name="Fletcher C.F."/>
            <person name="Fukushima T."/>
            <person name="Furuno M."/>
            <person name="Futaki S."/>
            <person name="Gariboldi M."/>
            <person name="Georgii-Hemming P."/>
            <person name="Gingeras T.R."/>
            <person name="Gojobori T."/>
            <person name="Green R.E."/>
            <person name="Gustincich S."/>
            <person name="Harbers M."/>
            <person name="Hayashi Y."/>
            <person name="Hensch T.K."/>
            <person name="Hirokawa N."/>
            <person name="Hill D."/>
            <person name="Huminiecki L."/>
            <person name="Iacono M."/>
            <person name="Ikeo K."/>
            <person name="Iwama A."/>
            <person name="Ishikawa T."/>
            <person name="Jakt M."/>
            <person name="Kanapin A."/>
            <person name="Katoh M."/>
            <person name="Kawasawa Y."/>
            <person name="Kelso J."/>
            <person name="Kitamura H."/>
            <person name="Kitano H."/>
            <person name="Kollias G."/>
            <person name="Krishnan S.P."/>
            <person name="Kruger A."/>
            <person name="Kummerfeld S.K."/>
            <person name="Kurochkin I.V."/>
            <person name="Lareau L.F."/>
            <person name="Lazarevic D."/>
            <person name="Lipovich L."/>
            <person name="Liu J."/>
            <person name="Liuni S."/>
            <person name="McWilliam S."/>
            <person name="Madan Babu M."/>
            <person name="Madera M."/>
            <person name="Marchionni L."/>
            <person name="Matsuda H."/>
            <person name="Matsuzawa S."/>
            <person name="Miki H."/>
            <person name="Mignone F."/>
            <person name="Miyake S."/>
            <person name="Morris K."/>
            <person name="Mottagui-Tabar S."/>
            <person name="Mulder N."/>
            <person name="Nakano N."/>
            <person name="Nakauchi H."/>
            <person name="Ng P."/>
            <person name="Nilsson R."/>
            <person name="Nishiguchi S."/>
            <person name="Nishikawa S."/>
            <person name="Nori F."/>
            <person name="Ohara O."/>
            <person name="Okazaki Y."/>
            <person name="Orlando V."/>
            <person name="Pang K.C."/>
            <person name="Pavan W.J."/>
            <person name="Pavesi G."/>
            <person name="Pesole G."/>
            <person name="Petrovsky N."/>
            <person name="Piazza S."/>
            <person name="Reed J."/>
            <person name="Reid J.F."/>
            <person name="Ring B.Z."/>
            <person name="Ringwald M."/>
            <person name="Rost B."/>
            <person name="Ruan Y."/>
            <person name="Salzberg S.L."/>
            <person name="Sandelin A."/>
            <person name="Schneider C."/>
            <person name="Schoenbach C."/>
            <person name="Sekiguchi K."/>
            <person name="Semple C.A."/>
            <person name="Seno S."/>
            <person name="Sessa L."/>
            <person name="Sheng Y."/>
            <person name="Shibata Y."/>
            <person name="Shimada H."/>
            <person name="Shimada K."/>
            <person name="Silva D."/>
            <person name="Sinclair B."/>
            <person name="Sperling S."/>
            <person name="Stupka E."/>
            <person name="Sugiura K."/>
            <person name="Sultana R."/>
            <person name="Takenaka Y."/>
            <person name="Taki K."/>
            <person name="Tammoja K."/>
            <person name="Tan S.L."/>
            <person name="Tang S."/>
            <person name="Taylor M.S."/>
            <person name="Tegner J."/>
            <person name="Teichmann S.A."/>
            <person name="Ueda H.R."/>
            <person name="van Nimwegen E."/>
            <person name="Verardo R."/>
            <person name="Wei C.L."/>
            <person name="Yagi K."/>
            <person name="Yamanishi H."/>
            <person name="Zabarovsky E."/>
            <person name="Zhu S."/>
            <person name="Zimmer A."/>
            <person name="Hide W."/>
            <person name="Bult C."/>
            <person name="Grimmond S.M."/>
            <person name="Teasdale R.D."/>
            <person name="Liu E.T."/>
            <person name="Brusic V."/>
            <person name="Quackenbush J."/>
            <person name="Wahlestedt C."/>
            <person name="Mattick J.S."/>
            <person name="Hume D.A."/>
            <person name="Kai C."/>
            <person name="Sasaki D."/>
            <person name="Tomaru Y."/>
            <person name="Fukuda S."/>
            <person name="Kanamori-Katayama M."/>
            <person name="Suzuki M."/>
            <person name="Aoki J."/>
            <person name="Arakawa T."/>
            <person name="Iida J."/>
            <person name="Imamura K."/>
            <person name="Itoh M."/>
            <person name="Kato T."/>
            <person name="Kawaji H."/>
            <person name="Kawagashira N."/>
            <person name="Kawashima T."/>
            <person name="Kojima M."/>
            <person name="Kondo S."/>
            <person name="Konno H."/>
            <person name="Nakano K."/>
            <person name="Ninomiya N."/>
            <person name="Nishio T."/>
            <person name="Okada M."/>
            <person name="Plessy C."/>
            <person name="Shibata K."/>
            <person name="Shiraki T."/>
            <person name="Suzuki S."/>
            <person name="Tagami M."/>
            <person name="Waki K."/>
            <person name="Watahiki A."/>
            <person name="Okamura-Oho Y."/>
            <person name="Suzuki H."/>
            <person name="Kawai J."/>
            <person name="Hayashizaki Y."/>
        </authorList>
    </citation>
    <scope>NUCLEOTIDE SEQUENCE [LARGE SCALE MRNA]</scope>
    <source>
        <strain>BALB/cJ</strain>
        <strain>C57BL/6J</strain>
        <strain>NOD</strain>
        <tissue>Head</tissue>
        <tissue>Liver</tissue>
        <tissue>Stomach</tissue>
    </source>
</reference>
<reference key="3">
    <citation type="journal article" date="2004" name="Genome Res.">
        <title>The status, quality, and expansion of the NIH full-length cDNA project: the Mammalian Gene Collection (MGC).</title>
        <authorList>
            <consortium name="The MGC Project Team"/>
        </authorList>
    </citation>
    <scope>NUCLEOTIDE SEQUENCE [LARGE SCALE MRNA]</scope>
    <source>
        <tissue>Colon</tissue>
    </source>
</reference>
<reference key="4">
    <citation type="journal article" date="2001" name="Curr. Biol.">
        <title>Identification of the NIMA family kinases NEK6/7 as regulators of the p70 ribosomal S6 kinase.</title>
        <authorList>
            <person name="Belham C."/>
            <person name="Comb M.J."/>
            <person name="Avruch J."/>
        </authorList>
    </citation>
    <scope>TISSUE SPECIFICITY</scope>
</reference>
<reference key="5">
    <citation type="journal article" date="2010" name="J. Biol. Chem.">
        <title>Role of NEK6 in tumor promoter-induced transformation in JB6 C141 mouse skin epidermal cells.</title>
        <authorList>
            <person name="Jeon Y.J."/>
            <person name="Lee K.Y."/>
            <person name="Cho Y.Y."/>
            <person name="Pugliese A."/>
            <person name="Kim H.G."/>
            <person name="Jeong C.H."/>
            <person name="Bode A.M."/>
            <person name="Dong Z."/>
        </authorList>
    </citation>
    <scope>FUNCTION</scope>
    <scope>CATALYTIC ACTIVITY</scope>
    <scope>SUBCELLULAR LOCATION</scope>
    <scope>PHOSPHORYLATION</scope>
    <scope>INTERACTION WITH STAT3</scope>
</reference>
<organism>
    <name type="scientific">Mus musculus</name>
    <name type="common">Mouse</name>
    <dbReference type="NCBI Taxonomy" id="10090"/>
    <lineage>
        <taxon>Eukaryota</taxon>
        <taxon>Metazoa</taxon>
        <taxon>Chordata</taxon>
        <taxon>Craniata</taxon>
        <taxon>Vertebrata</taxon>
        <taxon>Euteleostomi</taxon>
        <taxon>Mammalia</taxon>
        <taxon>Eutheria</taxon>
        <taxon>Euarchontoglires</taxon>
        <taxon>Glires</taxon>
        <taxon>Rodentia</taxon>
        <taxon>Myomorpha</taxon>
        <taxon>Muroidea</taxon>
        <taxon>Muridae</taxon>
        <taxon>Murinae</taxon>
        <taxon>Mus</taxon>
        <taxon>Mus</taxon>
    </lineage>
</organism>
<feature type="chain" id="PRO_0000086428" description="Serine/threonine-protein kinase Nek6">
    <location>
        <begin position="1"/>
        <end position="313"/>
    </location>
</feature>
<feature type="domain" description="Protein kinase" evidence="3">
    <location>
        <begin position="45"/>
        <end position="310"/>
    </location>
</feature>
<feature type="region of interest" description="Interaction with ARHGAP33, ANKRA2, CDC42, PRDX3, RAD26L, RBBP6, RPS7 and TRIP4" evidence="1">
    <location>
        <begin position="1"/>
        <end position="44"/>
    </location>
</feature>
<feature type="region of interest" description="Disordered" evidence="5">
    <location>
        <begin position="1"/>
        <end position="32"/>
    </location>
</feature>
<feature type="region of interest" description="Interaction with APBB1" evidence="1">
    <location>
        <begin position="267"/>
        <end position="270"/>
    </location>
</feature>
<feature type="active site" description="Proton acceptor" evidence="3 4">
    <location>
        <position position="172"/>
    </location>
</feature>
<feature type="binding site" evidence="3">
    <location>
        <begin position="51"/>
        <end position="59"/>
    </location>
    <ligand>
        <name>ATP</name>
        <dbReference type="ChEBI" id="CHEBI:30616"/>
    </ligand>
</feature>
<feature type="binding site" evidence="3">
    <location>
        <position position="74"/>
    </location>
    <ligand>
        <name>ATP</name>
        <dbReference type="ChEBI" id="CHEBI:30616"/>
    </ligand>
</feature>
<feature type="site" description="Autoinhibitory" evidence="1">
    <location>
        <position position="108"/>
    </location>
</feature>
<feature type="modified residue" description="Phosphoserine" evidence="2">
    <location>
        <position position="37"/>
    </location>
</feature>
<feature type="modified residue" description="Phosphothreonine" evidence="2">
    <location>
        <position position="202"/>
    </location>
</feature>
<feature type="modified residue" description="Phosphoserine; by NEK9" evidence="2">
    <location>
        <position position="206"/>
    </location>
</feature>
<feature type="modified residue" description="Phosphothreonine" evidence="2">
    <location>
        <position position="210"/>
    </location>
</feature>
<feature type="sequence conflict" description="In Ref. 2; BAC35995." evidence="8" ref="2">
    <original>T</original>
    <variation>A</variation>
    <location>
        <position position="210"/>
    </location>
</feature>
<feature type="sequence conflict" description="In Ref. 2; BAB23676." evidence="8" ref="2">
    <original>Q</original>
    <variation>R</variation>
    <location>
        <position position="244"/>
    </location>
</feature>
<feature type="sequence conflict" description="In Ref. 2; BAC35995." evidence="8" ref="2">
    <original>P</original>
    <variation>R</variation>
    <location>
        <position position="246"/>
    </location>
</feature>
<name>NEK6_MOUSE</name>
<accession>Q9ES70</accession>
<accession>Q3TCE9</accession>
<accession>Q8C6E6</accession>
<accession>Q9D0E2</accession>
<accession>Q9DBI8</accession>
<proteinExistence type="evidence at protein level"/>
<evidence type="ECO:0000250" key="1"/>
<evidence type="ECO:0000250" key="2">
    <source>
        <dbReference type="UniProtKB" id="Q9HC98"/>
    </source>
</evidence>
<evidence type="ECO:0000255" key="3">
    <source>
        <dbReference type="PROSITE-ProRule" id="PRU00159"/>
    </source>
</evidence>
<evidence type="ECO:0000255" key="4">
    <source>
        <dbReference type="PROSITE-ProRule" id="PRU10027"/>
    </source>
</evidence>
<evidence type="ECO:0000256" key="5">
    <source>
        <dbReference type="SAM" id="MobiDB-lite"/>
    </source>
</evidence>
<evidence type="ECO:0000269" key="6">
    <source>
    </source>
</evidence>
<evidence type="ECO:0000269" key="7">
    <source>
    </source>
</evidence>
<evidence type="ECO:0000305" key="8"/>
<evidence type="ECO:0000305" key="9">
    <source>
    </source>
</evidence>
<evidence type="ECO:0000312" key="10">
    <source>
        <dbReference type="MGI" id="MGI:1891638"/>
    </source>
</evidence>
<keyword id="KW-0053">Apoptosis</keyword>
<keyword id="KW-0067">ATP-binding</keyword>
<keyword id="KW-0131">Cell cycle</keyword>
<keyword id="KW-0132">Cell division</keyword>
<keyword id="KW-0159">Chromosome partition</keyword>
<keyword id="KW-0963">Cytoplasm</keyword>
<keyword id="KW-0206">Cytoskeleton</keyword>
<keyword id="KW-0418">Kinase</keyword>
<keyword id="KW-0460">Magnesium</keyword>
<keyword id="KW-0479">Metal-binding</keyword>
<keyword id="KW-0498">Mitosis</keyword>
<keyword id="KW-0547">Nucleotide-binding</keyword>
<keyword id="KW-0539">Nucleus</keyword>
<keyword id="KW-0597">Phosphoprotein</keyword>
<keyword id="KW-1185">Reference proteome</keyword>
<keyword id="KW-0723">Serine/threonine-protein kinase</keyword>
<keyword id="KW-0808">Transferase</keyword>
<sequence length="313" mass="35742">MAGQPSHMPHGGSPNHLCHALGPAPPPDPQRLPNTLSFRCSLADFQIEKKIGRGQFSEVYKATCLLDRKTVALKKVQIFEMMDAKARQDCVKEIGLLKQLNHPNIIKYLDSFIEDNELNIVLELADAGDLSQMIKYFKKQKRLIPERTVWKYFVQLCSAVEHMHSRRVMHRDIKPANVFITATGIVKLGDLGLGRFFSSETTAAHSLVGTPYYMSPERIHENGYNFKSDIWSLGCLLYEMAALQSPFYGDKMNLFSLCQKIEQCDYPPLPGEHYSEKLRELVSMCIYPDPDHRPDIVYVHQVARQMHVWTSST</sequence>
<protein>
    <recommendedName>
        <fullName evidence="9">Serine/threonine-protein kinase Nek6</fullName>
        <ecNumber evidence="7">2.7.11.34</ecNumber>
    </recommendedName>
    <alternativeName>
        <fullName>Never in mitosis A-related kinase 6</fullName>
        <shortName>NimA-related protein kinase 6</shortName>
    </alternativeName>
</protein>